<reference key="1">
    <citation type="journal article" date="2011" name="Toxicon">
        <title>Diversity of conotoxin types from Conus californicus reflects a diversity of prey types and a novel evolutionary history.</title>
        <authorList>
            <person name="Elliger C.A."/>
            <person name="Richmond T.A."/>
            <person name="Lebaric Z.N."/>
            <person name="Pierce N.T."/>
            <person name="Sweedler J.V."/>
            <person name="Gilly W.F."/>
        </authorList>
    </citation>
    <scope>NUCLEOTIDE SEQUENCE [MRNA]</scope>
    <source>
        <tissue>Venom duct</tissue>
    </source>
</reference>
<dbReference type="EMBL" id="GU306162">
    <property type="protein sequence ID" value="ADB04240.1"/>
    <property type="molecule type" value="mRNA"/>
</dbReference>
<dbReference type="SMR" id="D2Y497"/>
<dbReference type="ConoServer" id="3971">
    <property type="toxin name" value="Cal6.1c precursor"/>
</dbReference>
<dbReference type="GO" id="GO:0005576">
    <property type="term" value="C:extracellular region"/>
    <property type="evidence" value="ECO:0007669"/>
    <property type="project" value="UniProtKB-SubCell"/>
</dbReference>
<dbReference type="GO" id="GO:0099106">
    <property type="term" value="F:ion channel regulator activity"/>
    <property type="evidence" value="ECO:0007669"/>
    <property type="project" value="UniProtKB-KW"/>
</dbReference>
<dbReference type="GO" id="GO:0090729">
    <property type="term" value="F:toxin activity"/>
    <property type="evidence" value="ECO:0007669"/>
    <property type="project" value="UniProtKB-KW"/>
</dbReference>
<protein>
    <recommendedName>
        <fullName evidence="2">Conotoxin Cal6.1c</fullName>
    </recommendedName>
</protein>
<feature type="propeptide" id="PRO_5000566318" evidence="4">
    <location>
        <begin position="1" status="less than"/>
        <end position="35"/>
    </location>
</feature>
<feature type="peptide" id="PRO_5000566319" description="Conotoxin Cal6.1c" evidence="4">
    <location>
        <begin position="9"/>
        <end position="35"/>
    </location>
</feature>
<feature type="disulfide bond" evidence="1">
    <location>
        <begin position="9"/>
        <end position="25"/>
    </location>
</feature>
<feature type="disulfide bond" evidence="1">
    <location>
        <begin position="16"/>
        <end position="29"/>
    </location>
</feature>
<feature type="disulfide bond" evidence="1">
    <location>
        <begin position="24"/>
        <end position="34"/>
    </location>
</feature>
<feature type="non-terminal residue">
    <location>
        <position position="1"/>
    </location>
</feature>
<evidence type="ECO:0000250" key="1"/>
<evidence type="ECO:0000303" key="2">
    <source>
    </source>
</evidence>
<evidence type="ECO:0000305" key="3"/>
<evidence type="ECO:0000305" key="4">
    <source>
    </source>
</evidence>
<sequence>GLNRPSKRCLAGSAPCEFHKRSTCCSGHCIIWWCA</sequence>
<proteinExistence type="evidence at transcript level"/>
<name>O16C_CONCL</name>
<keyword id="KW-0165">Cleavage on pair of basic residues</keyword>
<keyword id="KW-1015">Disulfide bond</keyword>
<keyword id="KW-0872">Ion channel impairing toxin</keyword>
<keyword id="KW-0960">Knottin</keyword>
<keyword id="KW-0528">Neurotoxin</keyword>
<keyword id="KW-0964">Secreted</keyword>
<keyword id="KW-0800">Toxin</keyword>
<accession>D2Y497</accession>
<organism>
    <name type="scientific">Californiconus californicus</name>
    <name type="common">California cone</name>
    <name type="synonym">Conus californicus</name>
    <dbReference type="NCBI Taxonomy" id="1736779"/>
    <lineage>
        <taxon>Eukaryota</taxon>
        <taxon>Metazoa</taxon>
        <taxon>Spiralia</taxon>
        <taxon>Lophotrochozoa</taxon>
        <taxon>Mollusca</taxon>
        <taxon>Gastropoda</taxon>
        <taxon>Caenogastropoda</taxon>
        <taxon>Neogastropoda</taxon>
        <taxon>Conoidea</taxon>
        <taxon>Conidae</taxon>
        <taxon>Californiconus</taxon>
    </lineage>
</organism>
<comment type="function">
    <text evidence="3">Probable neurotoxin with unknown target. Possibly targets ion channels.</text>
</comment>
<comment type="subcellular location">
    <subcellularLocation>
        <location evidence="4">Secreted</location>
    </subcellularLocation>
</comment>
<comment type="tissue specificity">
    <text evidence="4">Expressed by the venom duct.</text>
</comment>
<comment type="domain">
    <text evidence="1">The presence of a 'disulfide through disulfide knot' structurally defines this protein as a knottin.</text>
</comment>
<comment type="domain">
    <text>The cysteine framework is VI/VII (C-C-CC-C-C).</text>
</comment>
<comment type="similarity">
    <text evidence="3">Belongs to the conotoxin O1 superfamily.</text>
</comment>